<accession>O52384</accession>
<geneLocation type="plasmid" evidence="7">
    <name>pWWU2</name>
</geneLocation>
<name>NAGB_RALSP</name>
<organism>
    <name type="scientific">Ralstonia sp</name>
    <dbReference type="NCBI Taxonomy" id="54061"/>
    <lineage>
        <taxon>Bacteria</taxon>
        <taxon>Pseudomonadati</taxon>
        <taxon>Pseudomonadota</taxon>
        <taxon>Betaproteobacteria</taxon>
        <taxon>Burkholderiales</taxon>
        <taxon>Burkholderiaceae</taxon>
        <taxon>Ralstonia</taxon>
    </lineage>
</organism>
<feature type="chain" id="PRO_0000420237" description="1,2-dihydroxy-1,2-dihydronaphthalene dehydrogenase">
    <location>
        <begin position="1"/>
        <end position="259"/>
    </location>
</feature>
<feature type="active site" description="Proton acceptor" evidence="2">
    <location>
        <position position="153"/>
    </location>
</feature>
<feature type="binding site" evidence="2">
    <location>
        <begin position="8"/>
        <end position="35"/>
    </location>
    <ligand>
        <name>NAD(+)</name>
        <dbReference type="ChEBI" id="CHEBI:57540"/>
    </ligand>
</feature>
<feature type="binding site" evidence="2">
    <location>
        <position position="58"/>
    </location>
    <ligand>
        <name>NAD(+)</name>
        <dbReference type="ChEBI" id="CHEBI:57540"/>
    </ligand>
</feature>
<feature type="binding site" evidence="2">
    <location>
        <position position="140"/>
    </location>
    <ligand>
        <name>substrate</name>
    </ligand>
</feature>
<feature type="binding site" evidence="2">
    <location>
        <position position="157"/>
    </location>
    <ligand>
        <name>NAD(+)</name>
        <dbReference type="ChEBI" id="CHEBI:57540"/>
    </ligand>
</feature>
<evidence type="ECO:0000250" key="1">
    <source>
        <dbReference type="UniProtKB" id="P0A170"/>
    </source>
</evidence>
<evidence type="ECO:0000250" key="2">
    <source>
        <dbReference type="UniProtKB" id="Q48436"/>
    </source>
</evidence>
<evidence type="ECO:0000255" key="3"/>
<evidence type="ECO:0000269" key="4">
    <source>
    </source>
</evidence>
<evidence type="ECO:0000303" key="5">
    <source>
    </source>
</evidence>
<evidence type="ECO:0000305" key="6"/>
<evidence type="ECO:0000312" key="7">
    <source>
        <dbReference type="EMBL" id="AAD12612.1"/>
    </source>
</evidence>
<proteinExistence type="inferred from homology"/>
<keyword id="KW-0058">Aromatic hydrocarbons catabolism</keyword>
<keyword id="KW-0520">NAD</keyword>
<keyword id="KW-0560">Oxidoreductase</keyword>
<keyword id="KW-0614">Plasmid</keyword>
<gene>
    <name evidence="7" type="primary">nagB</name>
</gene>
<dbReference type="EC" id="1.3.1.29" evidence="1"/>
<dbReference type="EMBL" id="AF036940">
    <property type="protein sequence ID" value="AAD12612.1"/>
    <property type="molecule type" value="Genomic_DNA"/>
</dbReference>
<dbReference type="SMR" id="O52384"/>
<dbReference type="UniPathway" id="UPA00082"/>
<dbReference type="GO" id="GO:0018505">
    <property type="term" value="F:cis-1,2-dihydro-1,2-dihydroxynaphthalene dehydrogenase activity"/>
    <property type="evidence" value="ECO:0007669"/>
    <property type="project" value="UniProtKB-EC"/>
</dbReference>
<dbReference type="GO" id="GO:0050664">
    <property type="term" value="F:oxidoreductase activity, acting on NAD(P)H, oxygen as acceptor"/>
    <property type="evidence" value="ECO:0007669"/>
    <property type="project" value="TreeGrafter"/>
</dbReference>
<dbReference type="GO" id="GO:0009056">
    <property type="term" value="P:catabolic process"/>
    <property type="evidence" value="ECO:0007669"/>
    <property type="project" value="UniProtKB-KW"/>
</dbReference>
<dbReference type="CDD" id="cd05348">
    <property type="entry name" value="BphB-like_SDR_c"/>
    <property type="match status" value="1"/>
</dbReference>
<dbReference type="Gene3D" id="3.40.50.720">
    <property type="entry name" value="NAD(P)-binding Rossmann-like Domain"/>
    <property type="match status" value="1"/>
</dbReference>
<dbReference type="InterPro" id="IPR047950">
    <property type="entry name" value="BphB-like_SDR"/>
</dbReference>
<dbReference type="InterPro" id="IPR036291">
    <property type="entry name" value="NAD(P)-bd_dom_sf"/>
</dbReference>
<dbReference type="InterPro" id="IPR002347">
    <property type="entry name" value="SDR_fam"/>
</dbReference>
<dbReference type="NCBIfam" id="NF004849">
    <property type="entry name" value="PRK06200.1"/>
    <property type="match status" value="1"/>
</dbReference>
<dbReference type="PANTHER" id="PTHR43008">
    <property type="entry name" value="BENZIL REDUCTASE"/>
    <property type="match status" value="1"/>
</dbReference>
<dbReference type="PANTHER" id="PTHR43008:SF4">
    <property type="entry name" value="CHAIN DEHYDROGENASE, PUTATIVE (AFU_ORTHOLOGUE AFUA_4G08710)-RELATED"/>
    <property type="match status" value="1"/>
</dbReference>
<dbReference type="Pfam" id="PF00106">
    <property type="entry name" value="adh_short"/>
    <property type="match status" value="1"/>
</dbReference>
<dbReference type="PRINTS" id="PR00081">
    <property type="entry name" value="GDHRDH"/>
</dbReference>
<dbReference type="PRINTS" id="PR00080">
    <property type="entry name" value="SDRFAMILY"/>
</dbReference>
<dbReference type="SUPFAM" id="SSF51735">
    <property type="entry name" value="NAD(P)-binding Rossmann-fold domains"/>
    <property type="match status" value="1"/>
</dbReference>
<sequence>MNIQQVIAITGAGSGIGLELVRSFKAAGYCVSALVRNEEQEAGLRSEFKDAIEIVAGDVCDHATNEKLVNKAVARFGHLDCFIGNAGIWDYMLGVDEPWEKLSGSFEEIFDINVKSYFSGISAALPELKKTNGSVVVTASVSSYAAGGGGSCYIASKHAVLGMVKALAYELAPHIRVNGVAPGGTVTSLAGPASAGFDKTKMKDMPGIDDMIKGLTPLGFAARPEDVVAPYLLLASREQGKFITGTVIGIDGGMALGRK</sequence>
<protein>
    <recommendedName>
        <fullName evidence="1">1,2-dihydroxy-1,2-dihydronaphthalene dehydrogenase</fullName>
        <ecNumber evidence="1">1.3.1.29</ecNumber>
    </recommendedName>
    <alternativeName>
        <fullName evidence="5">Cis-naphthalene dihydrodiol dehydrogenase</fullName>
    </alternativeName>
</protein>
<reference evidence="6 7" key="1">
    <citation type="journal article" date="1998" name="J. Bacteriol.">
        <title>A gene cluster encoding steps in conversion of naphthalene to gentisate in Pseudomonas sp. strain U2.</title>
        <authorList>
            <person name="Fuenmayor S.L."/>
            <person name="Wild M."/>
            <person name="Boyes A.L."/>
            <person name="Williams P.A."/>
        </authorList>
    </citation>
    <scope>NUCLEOTIDE SEQUENCE [GENOMIC DNA]</scope>
    <scope>FUNCTION</scope>
    <source>
        <strain evidence="7">U2</strain>
    </source>
</reference>
<comment type="function">
    <text evidence="4">Catalyzes the oxidation of naphthalene dihydrodiol into 1,2-dihydroxynaphthalene.</text>
</comment>
<comment type="catalytic activity">
    <reaction evidence="1">
        <text>(1R,2S)-1,2-dihydronaphthalene-1,2-diol + NAD(+) = naphthalene-1,2-diol + NADH + H(+)</text>
        <dbReference type="Rhea" id="RHEA:11832"/>
        <dbReference type="ChEBI" id="CHEBI:15378"/>
        <dbReference type="ChEBI" id="CHEBI:17435"/>
        <dbReference type="ChEBI" id="CHEBI:44343"/>
        <dbReference type="ChEBI" id="CHEBI:57540"/>
        <dbReference type="ChEBI" id="CHEBI:57945"/>
        <dbReference type="EC" id="1.3.1.29"/>
    </reaction>
</comment>
<comment type="pathway">
    <text evidence="4">Aromatic compound metabolism; naphthalene degradation.</text>
</comment>
<comment type="similarity">
    <text evidence="3">Belongs to the short-chain dehydrogenases/reductases (SDR) family.</text>
</comment>